<reference key="1">
    <citation type="journal article" date="2004" name="J. Biol. Chem.">
        <title>Molecular cloning and characterization of two mouse peroxisome proliferator-activated receptor alpha (PPARalpha)-regulated peroxisomal acyl-CoA thioesterases.</title>
        <authorList>
            <person name="Westin M.A.K."/>
            <person name="Alexson S.E.H."/>
            <person name="Hunt M.C."/>
        </authorList>
    </citation>
    <scope>NUCLEOTIDE SEQUENCE [MRNA]</scope>
    <scope>FUNCTION</scope>
    <scope>CATALYTIC ACTIVITY</scope>
    <scope>BIOPHYSICOCHEMICAL PROPERTIES</scope>
    <scope>PATHWAY</scope>
    <scope>SUBCELLULAR LOCATION</scope>
    <scope>TISSUE SPECIFICITY</scope>
    <scope>INDUCTION</scope>
    <source>
        <strain>129/Sv</strain>
    </source>
</reference>
<reference key="2">
    <citation type="journal article" date="2009" name="PLoS Biol.">
        <title>Lineage-specific biology revealed by a finished genome assembly of the mouse.</title>
        <authorList>
            <person name="Church D.M."/>
            <person name="Goodstadt L."/>
            <person name="Hillier L.W."/>
            <person name="Zody M.C."/>
            <person name="Goldstein S."/>
            <person name="She X."/>
            <person name="Bult C.J."/>
            <person name="Agarwala R."/>
            <person name="Cherry J.L."/>
            <person name="DiCuccio M."/>
            <person name="Hlavina W."/>
            <person name="Kapustin Y."/>
            <person name="Meric P."/>
            <person name="Maglott D."/>
            <person name="Birtle Z."/>
            <person name="Marques A.C."/>
            <person name="Graves T."/>
            <person name="Zhou S."/>
            <person name="Teague B."/>
            <person name="Potamousis K."/>
            <person name="Churas C."/>
            <person name="Place M."/>
            <person name="Herschleb J."/>
            <person name="Runnheim R."/>
            <person name="Forrest D."/>
            <person name="Amos-Landgraf J."/>
            <person name="Schwartz D.C."/>
            <person name="Cheng Z."/>
            <person name="Lindblad-Toh K."/>
            <person name="Eichler E.E."/>
            <person name="Ponting C.P."/>
        </authorList>
    </citation>
    <scope>NUCLEOTIDE SEQUENCE [LARGE SCALE GENOMIC DNA]</scope>
    <source>
        <strain>C57BL/6J</strain>
    </source>
</reference>
<reference key="3">
    <citation type="journal article" date="2006" name="FASEB J.">
        <title>Analysis of the mouse and human acyl-CoA thioesterase (ACOT) gene clusters shows that convergent, functional evolution results in a reduced number of human peroxisomal ACOTs.</title>
        <authorList>
            <person name="Hunt M.C."/>
            <person name="Rautanen A."/>
            <person name="Westin M.A.K."/>
            <person name="Svensson L.T."/>
            <person name="Alexson S.E.H."/>
        </authorList>
    </citation>
    <scope>FUNCTION</scope>
    <scope>CATALYTIC ACTIVITY</scope>
    <scope>PATHWAY</scope>
</reference>
<sequence>MVPTVSLEPTGHSCWDEPLSIAVRGLAPEQPVTLRTALRDEKGALFRAHARYRADSHGELDLARTPALGGSFSGLEPMGLLWAMEPDRPFWRLIKRDVQTPFVVELEVLDGHEPDGGRLLARAVHERHFMAPGVRRVPVREGRVRATLFLPPGTGPFPGIIDLFGVGGGLLEYRASLLAGKGFAVMALAYYKYDDLPKVIDILHLEYFEEAVTYLLSHPQVKGPGVGLLGISKGAELSLSMASFLKGITAAVVINGATVNVISTLYYKEESLPGLGMHLERIKVTKDGFKDIIDILNVPLEAPDQKSLIPLERSDTAFLFLVGQDDHNWKSEFYAREASKRLQAHGKEKPQIVCYPKTGHHIEPPYIPWSIAAPHSYFDKPILLGGEPRAHAMAQVDAWQRLQTFFHKHLSGDKRPSPAKL</sequence>
<organism>
    <name type="scientific">Mus musculus</name>
    <name type="common">Mouse</name>
    <dbReference type="NCBI Taxonomy" id="10090"/>
    <lineage>
        <taxon>Eukaryota</taxon>
        <taxon>Metazoa</taxon>
        <taxon>Chordata</taxon>
        <taxon>Craniata</taxon>
        <taxon>Vertebrata</taxon>
        <taxon>Euteleostomi</taxon>
        <taxon>Mammalia</taxon>
        <taxon>Eutheria</taxon>
        <taxon>Euarchontoglires</taxon>
        <taxon>Glires</taxon>
        <taxon>Rodentia</taxon>
        <taxon>Myomorpha</taxon>
        <taxon>Muroidea</taxon>
        <taxon>Muridae</taxon>
        <taxon>Murinae</taxon>
        <taxon>Mus</taxon>
        <taxon>Mus</taxon>
    </lineage>
</organism>
<name>ACOT5_MOUSE</name>
<proteinExistence type="evidence at protein level"/>
<evidence type="ECO:0000250" key="1"/>
<evidence type="ECO:0000255" key="2"/>
<evidence type="ECO:0000269" key="3">
    <source>
    </source>
</evidence>
<evidence type="ECO:0000269" key="4">
    <source>
    </source>
</evidence>
<evidence type="ECO:0000303" key="5">
    <source>
    </source>
</evidence>
<evidence type="ECO:0000303" key="6">
    <source>
    </source>
</evidence>
<evidence type="ECO:0000305" key="7"/>
<evidence type="ECO:0000305" key="8">
    <source>
    </source>
</evidence>
<evidence type="ECO:0000305" key="9">
    <source>
    </source>
</evidence>
<accession>Q6Q2Z6</accession>
<accession>E9QKJ5</accession>
<dbReference type="EC" id="3.1.2.2" evidence="3 4"/>
<dbReference type="EMBL" id="AY563099">
    <property type="protein sequence ID" value="AAS75457.1"/>
    <property type="molecule type" value="mRNA"/>
</dbReference>
<dbReference type="EMBL" id="AC125071">
    <property type="status" value="NOT_ANNOTATED_CDS"/>
    <property type="molecule type" value="Genomic_DNA"/>
</dbReference>
<dbReference type="CCDS" id="CCDS26037.1"/>
<dbReference type="RefSeq" id="NP_663419.3">
    <property type="nucleotide sequence ID" value="NM_145444.3"/>
</dbReference>
<dbReference type="RefSeq" id="XP_006515756.4">
    <property type="nucleotide sequence ID" value="XM_006515693.5"/>
</dbReference>
<dbReference type="SMR" id="Q6Q2Z6"/>
<dbReference type="BioGRID" id="229947">
    <property type="interactions" value="2"/>
</dbReference>
<dbReference type="FunCoup" id="Q6Q2Z6">
    <property type="interactions" value="114"/>
</dbReference>
<dbReference type="STRING" id="10090.ENSMUSP00000042019"/>
<dbReference type="SwissLipids" id="SLP:000000531"/>
<dbReference type="ESTHER" id="mouse-acot5">
    <property type="family name" value="Acyl-CoA_Thioesterase"/>
</dbReference>
<dbReference type="MEROPS" id="S09.A51"/>
<dbReference type="TCDB" id="4.C.3.1.1">
    <property type="family name" value="the acyl-coa thioesterase (acoa-t) family"/>
</dbReference>
<dbReference type="iPTMnet" id="Q6Q2Z6"/>
<dbReference type="PhosphoSitePlus" id="Q6Q2Z6"/>
<dbReference type="jPOST" id="Q6Q2Z6"/>
<dbReference type="PaxDb" id="10090-ENSMUSP00000042019"/>
<dbReference type="PeptideAtlas" id="Q6Q2Z6"/>
<dbReference type="ProteomicsDB" id="285651"/>
<dbReference type="Pumba" id="Q6Q2Z6"/>
<dbReference type="DNASU" id="217698"/>
<dbReference type="Ensembl" id="ENSMUST00000046422.11">
    <property type="protein sequence ID" value="ENSMUSP00000042019.5"/>
    <property type="gene ID" value="ENSMUSG00000042540.13"/>
</dbReference>
<dbReference type="GeneID" id="217698"/>
<dbReference type="KEGG" id="mmu:217698"/>
<dbReference type="UCSC" id="uc007oeh.1">
    <property type="organism name" value="mouse"/>
</dbReference>
<dbReference type="AGR" id="MGI:2384969"/>
<dbReference type="CTD" id="217698"/>
<dbReference type="MGI" id="MGI:2384969">
    <property type="gene designation" value="Acot5"/>
</dbReference>
<dbReference type="VEuPathDB" id="HostDB:ENSMUSG00000042540"/>
<dbReference type="eggNOG" id="ENOG502QQ8Z">
    <property type="taxonomic scope" value="Eukaryota"/>
</dbReference>
<dbReference type="GeneTree" id="ENSGT01010000222336"/>
<dbReference type="HOGENOM" id="CLU_029849_4_0_1"/>
<dbReference type="InParanoid" id="Q6Q2Z6"/>
<dbReference type="OMA" id="EPPYFPW"/>
<dbReference type="OrthoDB" id="6347013at2759"/>
<dbReference type="PhylomeDB" id="Q6Q2Z6"/>
<dbReference type="TreeFam" id="TF314911"/>
<dbReference type="Reactome" id="R-MMU-77289">
    <property type="pathway name" value="Mitochondrial Fatty Acid Beta-Oxidation"/>
</dbReference>
<dbReference type="Reactome" id="R-MMU-9033241">
    <property type="pathway name" value="Peroxisomal protein import"/>
</dbReference>
<dbReference type="Reactome" id="R-MMU-9837999">
    <property type="pathway name" value="Mitochondrial protein degradation"/>
</dbReference>
<dbReference type="SABIO-RK" id="Q6Q2Z6"/>
<dbReference type="UniPathway" id="UPA00199"/>
<dbReference type="BioGRID-ORCS" id="217698">
    <property type="hits" value="0 hits in 79 CRISPR screens"/>
</dbReference>
<dbReference type="PRO" id="PR:Q6Q2Z6"/>
<dbReference type="Proteomes" id="UP000000589">
    <property type="component" value="Chromosome 12"/>
</dbReference>
<dbReference type="RNAct" id="Q6Q2Z6">
    <property type="molecule type" value="protein"/>
</dbReference>
<dbReference type="Bgee" id="ENSMUSG00000042540">
    <property type="expression patterns" value="Expressed in lip and 11 other cell types or tissues"/>
</dbReference>
<dbReference type="ExpressionAtlas" id="Q6Q2Z6">
    <property type="expression patterns" value="baseline and differential"/>
</dbReference>
<dbReference type="GO" id="GO:0005829">
    <property type="term" value="C:cytosol"/>
    <property type="evidence" value="ECO:0000314"/>
    <property type="project" value="MGI"/>
</dbReference>
<dbReference type="GO" id="GO:0005777">
    <property type="term" value="C:peroxisome"/>
    <property type="evidence" value="ECO:0000314"/>
    <property type="project" value="UniProtKB"/>
</dbReference>
<dbReference type="GO" id="GO:0052689">
    <property type="term" value="F:carboxylic ester hydrolase activity"/>
    <property type="evidence" value="ECO:0007669"/>
    <property type="project" value="UniProtKB-KW"/>
</dbReference>
<dbReference type="GO" id="GO:0047617">
    <property type="term" value="F:fatty acyl-CoA hydrolase activity"/>
    <property type="evidence" value="ECO:0000314"/>
    <property type="project" value="HGNC-UCL"/>
</dbReference>
<dbReference type="GO" id="GO:0006637">
    <property type="term" value="P:acyl-CoA metabolic process"/>
    <property type="evidence" value="ECO:0000314"/>
    <property type="project" value="HGNC-UCL"/>
</dbReference>
<dbReference type="GO" id="GO:0001676">
    <property type="term" value="P:long-chain fatty acid metabolic process"/>
    <property type="evidence" value="ECO:0000314"/>
    <property type="project" value="HGNC-UCL"/>
</dbReference>
<dbReference type="GO" id="GO:0032788">
    <property type="term" value="P:saturated monocarboxylic acid metabolic process"/>
    <property type="evidence" value="ECO:0000314"/>
    <property type="project" value="HGNC-UCL"/>
</dbReference>
<dbReference type="GO" id="GO:0032789">
    <property type="term" value="P:unsaturated monocarboxylic acid metabolic process"/>
    <property type="evidence" value="ECO:0000314"/>
    <property type="project" value="HGNC-UCL"/>
</dbReference>
<dbReference type="GO" id="GO:0000038">
    <property type="term" value="P:very long-chain fatty acid metabolic process"/>
    <property type="evidence" value="ECO:0000314"/>
    <property type="project" value="HGNC-UCL"/>
</dbReference>
<dbReference type="FunFam" id="2.60.40.2240:FF:000001">
    <property type="entry name" value="acyl-coenzyme A thioesterase 4"/>
    <property type="match status" value="1"/>
</dbReference>
<dbReference type="FunFam" id="3.40.50.1820:FF:000024">
    <property type="entry name" value="acyl-coenzyme A thioesterase 4"/>
    <property type="match status" value="1"/>
</dbReference>
<dbReference type="Gene3D" id="2.60.40.2240">
    <property type="entry name" value="Acyl-CoA thioester hydrolase/BAAT N-terminal domain"/>
    <property type="match status" value="1"/>
</dbReference>
<dbReference type="Gene3D" id="3.40.50.1820">
    <property type="entry name" value="alpha/beta hydrolase"/>
    <property type="match status" value="1"/>
</dbReference>
<dbReference type="InterPro" id="IPR029058">
    <property type="entry name" value="AB_hydrolase_fold"/>
</dbReference>
<dbReference type="InterPro" id="IPR016662">
    <property type="entry name" value="Acyl-CoA_thioEstase_long-chain"/>
</dbReference>
<dbReference type="InterPro" id="IPR014940">
    <property type="entry name" value="BAAT_C"/>
</dbReference>
<dbReference type="InterPro" id="IPR006862">
    <property type="entry name" value="Thio_Ohase/aa_AcTrfase"/>
</dbReference>
<dbReference type="InterPro" id="IPR042490">
    <property type="entry name" value="Thio_Ohase/BAAT_N"/>
</dbReference>
<dbReference type="PANTHER" id="PTHR10824:SF3">
    <property type="entry name" value="ACYL-COENZYME A THIOESTERASE 5"/>
    <property type="match status" value="1"/>
</dbReference>
<dbReference type="PANTHER" id="PTHR10824">
    <property type="entry name" value="ACYL-COENZYME A THIOESTERASE-RELATED"/>
    <property type="match status" value="1"/>
</dbReference>
<dbReference type="Pfam" id="PF08840">
    <property type="entry name" value="BAAT_C"/>
    <property type="match status" value="1"/>
</dbReference>
<dbReference type="Pfam" id="PF04775">
    <property type="entry name" value="Bile_Hydr_Trans"/>
    <property type="match status" value="1"/>
</dbReference>
<dbReference type="PIRSF" id="PIRSF016521">
    <property type="entry name" value="Acyl-CoA_hydro"/>
    <property type="match status" value="1"/>
</dbReference>
<dbReference type="SUPFAM" id="SSF53474">
    <property type="entry name" value="alpha/beta-Hydrolases"/>
    <property type="match status" value="1"/>
</dbReference>
<keyword id="KW-0276">Fatty acid metabolism</keyword>
<keyword id="KW-0378">Hydrolase</keyword>
<keyword id="KW-0443">Lipid metabolism</keyword>
<keyword id="KW-0576">Peroxisome</keyword>
<keyword id="KW-1185">Reference proteome</keyword>
<keyword id="KW-0719">Serine esterase</keyword>
<comment type="function">
    <text evidence="3 6">Catalyzes the hydrolysis of acyl-CoAs into free fatty acids and coenzyme A (CoASH), regulating their respective intracellular levels (PubMed:16940157). Mainly active on medium-chain acyl-CoAs (PubMed:15007068). Seems to be involved in intraperoxisomal regulation of acyl-CoA levels, but not CoASH levels (PubMed:15007068). May have a function in termination of beta-oxidation of fatty acids (PubMed:15007068).</text>
</comment>
<comment type="catalytic activity">
    <reaction evidence="3 4">
        <text>hexadecanoyl-CoA + H2O = hexadecanoate + CoA + H(+)</text>
        <dbReference type="Rhea" id="RHEA:16645"/>
        <dbReference type="ChEBI" id="CHEBI:7896"/>
        <dbReference type="ChEBI" id="CHEBI:15377"/>
        <dbReference type="ChEBI" id="CHEBI:15378"/>
        <dbReference type="ChEBI" id="CHEBI:57287"/>
        <dbReference type="ChEBI" id="CHEBI:57379"/>
        <dbReference type="EC" id="3.1.2.2"/>
    </reaction>
    <physiologicalReaction direction="left-to-right" evidence="8">
        <dbReference type="Rhea" id="RHEA:16646"/>
    </physiologicalReaction>
</comment>
<comment type="catalytic activity">
    <reaction evidence="3 4">
        <text>decanoyl-CoA + H2O = decanoate + CoA + H(+)</text>
        <dbReference type="Rhea" id="RHEA:40059"/>
        <dbReference type="ChEBI" id="CHEBI:15377"/>
        <dbReference type="ChEBI" id="CHEBI:15378"/>
        <dbReference type="ChEBI" id="CHEBI:27689"/>
        <dbReference type="ChEBI" id="CHEBI:57287"/>
        <dbReference type="ChEBI" id="CHEBI:61430"/>
    </reaction>
    <physiologicalReaction direction="left-to-right" evidence="8">
        <dbReference type="Rhea" id="RHEA:40060"/>
    </physiologicalReaction>
</comment>
<comment type="catalytic activity">
    <reaction evidence="3 4">
        <text>octanoyl-CoA + H2O = octanoate + CoA + H(+)</text>
        <dbReference type="Rhea" id="RHEA:30143"/>
        <dbReference type="ChEBI" id="CHEBI:15377"/>
        <dbReference type="ChEBI" id="CHEBI:15378"/>
        <dbReference type="ChEBI" id="CHEBI:25646"/>
        <dbReference type="ChEBI" id="CHEBI:57287"/>
        <dbReference type="ChEBI" id="CHEBI:57386"/>
    </reaction>
    <physiologicalReaction direction="left-to-right" evidence="8">
        <dbReference type="Rhea" id="RHEA:30144"/>
    </physiologicalReaction>
</comment>
<comment type="catalytic activity">
    <reaction evidence="3 4">
        <text>dodecanoyl-CoA + H2O = dodecanoate + CoA + H(+)</text>
        <dbReference type="Rhea" id="RHEA:30135"/>
        <dbReference type="ChEBI" id="CHEBI:15377"/>
        <dbReference type="ChEBI" id="CHEBI:15378"/>
        <dbReference type="ChEBI" id="CHEBI:18262"/>
        <dbReference type="ChEBI" id="CHEBI:57287"/>
        <dbReference type="ChEBI" id="CHEBI:57375"/>
    </reaction>
    <physiologicalReaction direction="left-to-right" evidence="8">
        <dbReference type="Rhea" id="RHEA:30136"/>
    </physiologicalReaction>
</comment>
<comment type="catalytic activity">
    <reaction evidence="3 4">
        <text>tetradecanoyl-CoA + H2O = tetradecanoate + CoA + H(+)</text>
        <dbReference type="Rhea" id="RHEA:40119"/>
        <dbReference type="ChEBI" id="CHEBI:15377"/>
        <dbReference type="ChEBI" id="CHEBI:15378"/>
        <dbReference type="ChEBI" id="CHEBI:30807"/>
        <dbReference type="ChEBI" id="CHEBI:57287"/>
        <dbReference type="ChEBI" id="CHEBI:57385"/>
    </reaction>
    <physiologicalReaction direction="left-to-right" evidence="8">
        <dbReference type="Rhea" id="RHEA:40120"/>
    </physiologicalReaction>
</comment>
<comment type="catalytic activity">
    <reaction evidence="3 4">
        <text>octadecanoyl-CoA + H2O = octadecanoate + CoA + H(+)</text>
        <dbReference type="Rhea" id="RHEA:30139"/>
        <dbReference type="ChEBI" id="CHEBI:15377"/>
        <dbReference type="ChEBI" id="CHEBI:15378"/>
        <dbReference type="ChEBI" id="CHEBI:25629"/>
        <dbReference type="ChEBI" id="CHEBI:57287"/>
        <dbReference type="ChEBI" id="CHEBI:57394"/>
    </reaction>
    <physiologicalReaction direction="left-to-right" evidence="8">
        <dbReference type="Rhea" id="RHEA:30140"/>
    </physiologicalReaction>
</comment>
<comment type="catalytic activity">
    <reaction evidence="3 4">
        <text>eicosanoyl-CoA + H2O = eicosanoate + CoA + H(+)</text>
        <dbReference type="Rhea" id="RHEA:40147"/>
        <dbReference type="ChEBI" id="CHEBI:15377"/>
        <dbReference type="ChEBI" id="CHEBI:15378"/>
        <dbReference type="ChEBI" id="CHEBI:32360"/>
        <dbReference type="ChEBI" id="CHEBI:57287"/>
        <dbReference type="ChEBI" id="CHEBI:57380"/>
    </reaction>
    <physiologicalReaction direction="left-to-right" evidence="8">
        <dbReference type="Rhea" id="RHEA:40148"/>
    </physiologicalReaction>
</comment>
<comment type="catalytic activity">
    <reaction evidence="4">
        <text>(9Z)-octadecenoyl-CoA + H2O = (9Z)-octadecenoate + CoA + H(+)</text>
        <dbReference type="Rhea" id="RHEA:40139"/>
        <dbReference type="ChEBI" id="CHEBI:15377"/>
        <dbReference type="ChEBI" id="CHEBI:15378"/>
        <dbReference type="ChEBI" id="CHEBI:30823"/>
        <dbReference type="ChEBI" id="CHEBI:57287"/>
        <dbReference type="ChEBI" id="CHEBI:57387"/>
    </reaction>
    <physiologicalReaction direction="left-to-right" evidence="8">
        <dbReference type="Rhea" id="RHEA:40140"/>
    </physiologicalReaction>
</comment>
<comment type="catalytic activity">
    <reaction evidence="4">
        <text>(9Z,12Z)-octadecadienoyl-CoA + H2O = (9Z,12Z)-octadecadienoate + CoA + H(+)</text>
        <dbReference type="Rhea" id="RHEA:40143"/>
        <dbReference type="ChEBI" id="CHEBI:15377"/>
        <dbReference type="ChEBI" id="CHEBI:15378"/>
        <dbReference type="ChEBI" id="CHEBI:30245"/>
        <dbReference type="ChEBI" id="CHEBI:57287"/>
        <dbReference type="ChEBI" id="CHEBI:57383"/>
    </reaction>
    <physiologicalReaction direction="left-to-right" evidence="8">
        <dbReference type="Rhea" id="RHEA:40144"/>
    </physiologicalReaction>
</comment>
<comment type="catalytic activity">
    <reaction evidence="3 4">
        <text>(5Z,8Z,11Z,14Z)-eicosatetraenoyl-CoA + H2O = (5Z,8Z,11Z,14Z)-eicosatetraenoate + CoA + H(+)</text>
        <dbReference type="Rhea" id="RHEA:40151"/>
        <dbReference type="ChEBI" id="CHEBI:15377"/>
        <dbReference type="ChEBI" id="CHEBI:15378"/>
        <dbReference type="ChEBI" id="CHEBI:32395"/>
        <dbReference type="ChEBI" id="CHEBI:57287"/>
        <dbReference type="ChEBI" id="CHEBI:57368"/>
    </reaction>
    <physiologicalReaction direction="left-to-right" evidence="8">
        <dbReference type="Rhea" id="RHEA:40152"/>
    </physiologicalReaction>
</comment>
<comment type="catalytic activity">
    <reaction evidence="3">
        <text>(9Z)-hexadecenoyl-CoA + H2O = (9Z)-hexadecenoate + CoA + H(+)</text>
        <dbReference type="Rhea" id="RHEA:40131"/>
        <dbReference type="ChEBI" id="CHEBI:15377"/>
        <dbReference type="ChEBI" id="CHEBI:15378"/>
        <dbReference type="ChEBI" id="CHEBI:32372"/>
        <dbReference type="ChEBI" id="CHEBI:57287"/>
        <dbReference type="ChEBI" id="CHEBI:61540"/>
    </reaction>
    <physiologicalReaction direction="left-to-right" evidence="8">
        <dbReference type="Rhea" id="RHEA:40132"/>
    </physiologicalReaction>
</comment>
<comment type="biophysicochemical properties">
    <kinetics>
        <KM evidence="3">28.4 uM for hexanoyl-coA</KM>
        <KM evidence="3">7.7 uM for octanoyl-coA</KM>
        <KM evidence="3">18 uM for decanoyl-coA</KM>
        <KM evidence="3">7.6 uM for dodecanoyl-coA</KM>
        <KM evidence="3">5.6 uM for tetradecanoyl-coA</KM>
        <KM evidence="3">15.9 uM for hexadecanoyl-coA</KM>
        <KM evidence="3">7 uM for (9Z)-hexadecenoyl-coA</KM>
        <KM evidence="3">34.8 uM for octadecanoyl-coA</KM>
        <KM evidence="3">8.9 uM for (9Z)-octadecenoyl-coA</KM>
        <KM evidence="3">32.5 uM for (9Z,12Z)-octadecadienoyl-coA</KM>
        <KM evidence="3">32.7 uM for eicosanoyl-coA</KM>
        <KM evidence="3">1.6 uM for (5Z,8Z,11Z,14Z)-eicosatetraenoyl-coA</KM>
        <Vmax evidence="3">0.23 umol/min/mg enzyme with hexanoyl-coA as substrate</Vmax>
        <Vmax evidence="3">0.74 umol/min/mg enzyme with octanoyl-coA as substrate</Vmax>
        <Vmax evidence="3">1.2 umol/min/mg enzyme with decanoyl-coA as substrate</Vmax>
        <Vmax evidence="3">1.1 umol/min/mg enzyme with dodecanoyl-coA as substrate</Vmax>
        <Vmax evidence="3">0.83 umol/min/mg enzyme with tetradecanoyl-coA as substrate</Vmax>
        <Vmax evidence="3">0.49 umol/min/mg enzyme with hexadecanoyl-coA as substrate</Vmax>
        <Vmax evidence="3">0.32 umol/min/mg enzyme with (9Z)-hexadecenoyl-coA as substrate</Vmax>
        <Vmax evidence="3">0.38 umol/min/mg enzyme with octadecanoyl-coA as substrate</Vmax>
        <Vmax evidence="3">0.14 umol/min/mg enzyme with (9Z)-octadecenoyl-coA as substrate</Vmax>
        <Vmax evidence="3">0.17 umol/min/mg enzyme with (9Z,12Z)-octadecadienoyl-coA as substrate</Vmax>
        <Vmax evidence="3">0.18 umol/min/mg enzyme with eicosanoyl-coA as substrate</Vmax>
        <Vmax evidence="3">0.23 umol/min/mg enzyme with (5Z,8Z,11Z,14Z)-eicosatetraenoyl-coA as substrate</Vmax>
    </kinetics>
</comment>
<comment type="pathway">
    <text evidence="8 9">Lipid metabolism; fatty acid metabolism.</text>
</comment>
<comment type="subcellular location">
    <subcellularLocation>
        <location evidence="3">Peroxisome</location>
    </subcellularLocation>
</comment>
<comment type="tissue specificity">
    <text evidence="3">Highly expressed in spleen, brain, testis and proximal and distal intestine; expressed at low level in the liver.</text>
</comment>
<comment type="induction">
    <text evidence="3">In the liver and kidney, by peroxisome proliferator, via the peroxisome proliferator-activated receptors (PPARs) and by fasting.</text>
</comment>
<comment type="similarity">
    <text evidence="7">Belongs to the C/M/P thioester hydrolase family.</text>
</comment>
<feature type="chain" id="PRO_0000202151" description="Acyl-coenzyme A thioesterase 5">
    <location>
        <begin position="1"/>
        <end position="421"/>
    </location>
</feature>
<feature type="short sequence motif" description="Microbody targeting signal" evidence="2">
    <location>
        <begin position="419"/>
        <end position="421"/>
    </location>
</feature>
<feature type="active site" description="Charge relay system" evidence="1">
    <location>
        <position position="232"/>
    </location>
</feature>
<feature type="active site" description="Charge relay system" evidence="1">
    <location>
        <position position="326"/>
    </location>
</feature>
<feature type="active site" description="Charge relay system" evidence="1">
    <location>
        <position position="360"/>
    </location>
</feature>
<feature type="sequence conflict" description="In Ref. 1; AAS75457." evidence="7" ref="1">
    <original>R</original>
    <variation>C</variation>
    <location>
        <position position="127"/>
    </location>
</feature>
<protein>
    <recommendedName>
        <fullName>Acyl-coenzyme A thioesterase 5</fullName>
        <shortName>Acyl-CoA thioesterase 5</shortName>
        <ecNumber evidence="3 4">3.1.2.2</ecNumber>
    </recommendedName>
    <alternativeName>
        <fullName>Peroxisomal acyl-coenzyme A thioester hydrolase Ic</fullName>
        <shortName evidence="5">PTE-Ic</shortName>
        <shortName>Peroxisomal acyl-CoA thioesterase Ic</shortName>
    </alternativeName>
</protein>
<gene>
    <name type="primary">Acot5</name>
</gene>